<keyword id="KW-0130">Cell adhesion</keyword>
<keyword id="KW-1003">Cell membrane</keyword>
<keyword id="KW-1015">Disulfide bond</keyword>
<keyword id="KW-0325">Glycoprotein</keyword>
<keyword id="KW-0393">Immunoglobulin domain</keyword>
<keyword id="KW-0472">Membrane</keyword>
<keyword id="KW-1185">Reference proteome</keyword>
<keyword id="KW-0677">Repeat</keyword>
<keyword id="KW-0732">Signal</keyword>
<keyword id="KW-0812">Transmembrane</keyword>
<keyword id="KW-1133">Transmembrane helix</keyword>
<protein>
    <recommendedName>
        <fullName>T-cell surface antigen CD2</fullName>
    </recommendedName>
    <alternativeName>
        <fullName>LFA-2</fullName>
    </alternativeName>
    <alternativeName>
        <fullName>LFA-3 receptor</fullName>
    </alternativeName>
    <alternativeName>
        <fullName>Lymphocyte antigen 37</fullName>
        <shortName>Ly-37</shortName>
    </alternativeName>
    <alternativeName>
        <fullName>T-cell surface antigen T11/Leu-5</fullName>
    </alternativeName>
    <cdAntigenName>CD2</cdAntigenName>
</protein>
<reference key="1">
    <citation type="journal article" date="1987" name="Eur. J. Immunol.">
        <title>The murine homologue of the T lymphocyte CD2 antigen: molecular cloning, chromosome assignment and cell surface expression.</title>
        <authorList>
            <person name="Sewell W.A."/>
            <person name="Brown M.H."/>
            <person name="Fink P.J."/>
            <person name="Kozak C.A."/>
            <person name="Crumpton M.J."/>
        </authorList>
    </citation>
    <scope>NUCLEOTIDE SEQUENCE [MRNA]</scope>
    <scope>SUBCELLULAR LOCATION</scope>
    <scope>GLYCOSYLATION</scope>
    <scope>TISSUE SPECIFICITY</scope>
    <source>
        <strain>B10.A</strain>
    </source>
</reference>
<reference key="2">
    <citation type="journal article" date="1987" name="Eur. J. Immunol.">
        <title>Murine and human T11 (CD2) cDNA sequences suggest a common signal transduction mechanism.</title>
        <authorList>
            <person name="Clayton L.K."/>
            <person name="Sayre P.H."/>
            <person name="Novotny J."/>
            <person name="Reinherz E.L."/>
        </authorList>
    </citation>
    <scope>NUCLEOTIDE SEQUENCE [MRNA]</scope>
</reference>
<reference key="3">
    <citation type="journal article" date="1988" name="Proc. Natl. Acad. Sci. U.S.A.">
        <title>Exon-intron organization and sequence comparison of human and murine T11 (CD2) genes.</title>
        <authorList>
            <person name="Diamond D.J."/>
            <person name="Clayton L.K."/>
            <person name="Sayre P.H."/>
            <person name="Reinherz E.L."/>
        </authorList>
    </citation>
    <scope>NUCLEOTIDE SEQUENCE [GENOMIC DNA]</scope>
    <source>
        <strain>BALB/cJ</strain>
        <tissue>Liver</tissue>
    </source>
</reference>
<reference key="4">
    <citation type="journal article" date="1988" name="J. Immunol.">
        <title>Molecular cloning of the murine homologue of CD2. Homology of the molecule to its human counterpart T11.</title>
        <authorList>
            <person name="Yagita H."/>
            <person name="Okumura K."/>
            <person name="Nakauchi H."/>
        </authorList>
    </citation>
    <scope>NUCLEOTIDE SEQUENCE [MRNA]</scope>
</reference>
<reference key="5">
    <citation type="journal article" date="2004" name="Genome Res.">
        <title>The status, quality, and expansion of the NIH full-length cDNA project: the Mammalian Gene Collection (MGC).</title>
        <authorList>
            <consortium name="The MGC Project Team"/>
        </authorList>
    </citation>
    <scope>NUCLEOTIDE SEQUENCE [LARGE SCALE MRNA]</scope>
    <source>
        <strain>C57BL/6J</strain>
        <tissue>Hematopoietic</tissue>
    </source>
</reference>
<reference key="6">
    <citation type="journal article" date="1998" name="Cell">
        <title>A novel adaptor protein orchestrates receptor patterning and cytoskeletal polarity in T-cell contacts.</title>
        <authorList>
            <person name="Dustin M.L."/>
            <person name="Olszowy M.W."/>
            <person name="Holdorf A.D."/>
            <person name="Li J."/>
            <person name="Bromley S."/>
            <person name="Desai N."/>
            <person name="Widder P."/>
            <person name="Rosenberger F."/>
            <person name="van der Merwe P.A."/>
            <person name="Allen P.M."/>
            <person name="Shaw A.S."/>
        </authorList>
    </citation>
    <scope>INTERACTION WITH CD2AP</scope>
</reference>
<reference key="7">
    <citation type="journal article" date="2003" name="Immunity">
        <title>The Wiskott-Aldrich syndrome protein acts downstream of CD2 and the CD2AP and PSTPIP1 adaptors to promote formation of the immunological synapse.</title>
        <authorList>
            <person name="Badour K."/>
            <person name="Zhang J."/>
            <person name="Shi F."/>
            <person name="McGavin M.K.H."/>
            <person name="Rampersad V."/>
            <person name="Hardy L.A."/>
            <person name="Field D."/>
            <person name="Siminovitch K.A."/>
        </authorList>
    </citation>
    <scope>INTERACTION WITH PSTPIP1</scope>
</reference>
<proteinExistence type="evidence at protein level"/>
<feature type="signal peptide">
    <location>
        <begin position="1"/>
        <end position="22"/>
    </location>
</feature>
<feature type="chain" id="PRO_0000014602" description="T-cell surface antigen CD2">
    <location>
        <begin position="23"/>
        <end position="344"/>
    </location>
</feature>
<feature type="topological domain" description="Extracellular" evidence="3">
    <location>
        <begin position="23"/>
        <end position="203"/>
    </location>
</feature>
<feature type="transmembrane region" description="Helical" evidence="3">
    <location>
        <begin position="204"/>
        <end position="229"/>
    </location>
</feature>
<feature type="topological domain" description="Cytoplasmic" evidence="3">
    <location>
        <begin position="230"/>
        <end position="344"/>
    </location>
</feature>
<feature type="domain" description="Ig-like V-type">
    <location>
        <begin position="23"/>
        <end position="121"/>
    </location>
</feature>
<feature type="domain" description="Ig-like C2-type">
    <location>
        <begin position="122"/>
        <end position="202"/>
    </location>
</feature>
<feature type="region of interest" description="CD58 binding region 1" evidence="1">
    <location>
        <begin position="56"/>
        <end position="68"/>
    </location>
</feature>
<feature type="region of interest" description="CD58 binding region 2" evidence="1">
    <location>
        <begin position="100"/>
        <end position="114"/>
    </location>
</feature>
<feature type="region of interest" description="Disordered" evidence="4">
    <location>
        <begin position="238"/>
        <end position="344"/>
    </location>
</feature>
<feature type="compositionally biased region" description="Basic and acidic residues" evidence="4">
    <location>
        <begin position="238"/>
        <end position="247"/>
    </location>
</feature>
<feature type="compositionally biased region" description="Low complexity" evidence="4">
    <location>
        <begin position="264"/>
        <end position="274"/>
    </location>
</feature>
<feature type="compositionally biased region" description="Basic residues" evidence="4">
    <location>
        <begin position="295"/>
        <end position="306"/>
    </location>
</feature>
<feature type="compositionally biased region" description="Pro residues" evidence="4">
    <location>
        <begin position="319"/>
        <end position="331"/>
    </location>
</feature>
<feature type="glycosylation site" description="N-linked (GlcNAc...) asparagine" evidence="3">
    <location>
        <position position="82"/>
    </location>
</feature>
<feature type="glycosylation site" description="N-linked (GlcNAc...) asparagine" evidence="3">
    <location>
        <position position="94"/>
    </location>
</feature>
<feature type="glycosylation site" description="N-linked (GlcNAc...) asparagine" evidence="3">
    <location>
        <position position="135"/>
    </location>
</feature>
<feature type="glycosylation site" description="N-linked (GlcNAc...) asparagine" evidence="3">
    <location>
        <position position="166"/>
    </location>
</feature>
<feature type="disulfide bond" evidence="2">
    <location>
        <begin position="133"/>
        <end position="197"/>
    </location>
</feature>
<feature type="disulfide bond" evidence="2">
    <location>
        <begin position="140"/>
        <end position="180"/>
    </location>
</feature>
<feature type="sequence conflict" description="In Ref. 3." evidence="8" ref="3">
    <original>Y</original>
    <variation>T</variation>
    <location>
        <position position="99"/>
    </location>
</feature>
<feature type="sequence conflict" description="In Ref. 3 and 4." evidence="8" ref="3 4">
    <original>M</original>
    <variation>V</variation>
    <location>
        <position position="128"/>
    </location>
</feature>
<feature type="sequence conflict" description="In Ref. 4; AAA37397." evidence="8" ref="4">
    <original>T</original>
    <variation>I</variation>
    <location>
        <position position="139"/>
    </location>
</feature>
<feature type="sequence conflict" description="In Ref. 3." evidence="8" ref="3">
    <original>N</original>
    <variation>A</variation>
    <location>
        <position position="175"/>
    </location>
</feature>
<feature type="sequence conflict" description="In Ref. 4; AAA37393/AAA37397." evidence="8" ref="4">
    <original>N</original>
    <variation>S</variation>
    <location>
        <position position="175"/>
    </location>
</feature>
<feature type="sequence conflict" description="In Ref. 2; CAA29500." evidence="8" ref="2">
    <original>K</original>
    <variation>N</variation>
    <location>
        <position position="191"/>
    </location>
</feature>
<feature type="sequence conflict" description="In Ref. 3 and 4." evidence="8" ref="3 4">
    <original>M</original>
    <variation>T</variation>
    <location>
        <position position="192"/>
    </location>
</feature>
<comment type="function">
    <text>CD2 interacts with lymphocyte function-associated antigen CD58 (LFA-3) and CD48/BCM1 to mediate adhesion between T-cells and other cell types. CD2 is implicated in the triggering of T-cells, the cytoplasmic domain is implicated in the signaling function.</text>
</comment>
<comment type="subunit">
    <text evidence="1 2 5 7">Interacts with CD48 (By similarity). Interacts with CD58 (LFA-3) (By similarity). Interacts with CD2AP (PubMed:9741631). Interacts with PSTPIP1 (PubMed:12530983). Interacts with FCGR3A; this interaction modulates NK cell activation and cytotoxicity.</text>
</comment>
<comment type="subcellular location">
    <subcellularLocation>
        <location evidence="6">Cell membrane</location>
        <topology evidence="8">Single-pass type I membrane protein</topology>
    </subcellularLocation>
</comment>
<comment type="tissue specificity">
    <text evidence="6">Detected in thymus and spleen.</text>
</comment>
<comment type="PTM">
    <text evidence="6">N-glycosylated.</text>
</comment>
<name>CD2_MOUSE</name>
<organism>
    <name type="scientific">Mus musculus</name>
    <name type="common">Mouse</name>
    <dbReference type="NCBI Taxonomy" id="10090"/>
    <lineage>
        <taxon>Eukaryota</taxon>
        <taxon>Metazoa</taxon>
        <taxon>Chordata</taxon>
        <taxon>Craniata</taxon>
        <taxon>Vertebrata</taxon>
        <taxon>Euteleostomi</taxon>
        <taxon>Mammalia</taxon>
        <taxon>Eutheria</taxon>
        <taxon>Euarchontoglires</taxon>
        <taxon>Glires</taxon>
        <taxon>Rodentia</taxon>
        <taxon>Myomorpha</taxon>
        <taxon>Muroidea</taxon>
        <taxon>Muridae</taxon>
        <taxon>Murinae</taxon>
        <taxon>Mus</taxon>
        <taxon>Mus</taxon>
    </lineage>
</organism>
<dbReference type="EMBL" id="Y00023">
    <property type="protein sequence ID" value="CAA68258.1"/>
    <property type="molecule type" value="mRNA"/>
</dbReference>
<dbReference type="EMBL" id="X06143">
    <property type="protein sequence ID" value="CAA29500.1"/>
    <property type="molecule type" value="mRNA"/>
</dbReference>
<dbReference type="EMBL" id="M19807">
    <property type="protein sequence ID" value="AAA37393.1"/>
    <property type="molecule type" value="Genomic_DNA"/>
</dbReference>
<dbReference type="EMBL" id="M19799">
    <property type="protein sequence ID" value="AAA37393.1"/>
    <property type="status" value="JOINED"/>
    <property type="molecule type" value="Genomic_DNA"/>
</dbReference>
<dbReference type="EMBL" id="M19801">
    <property type="protein sequence ID" value="AAA37393.1"/>
    <property type="status" value="JOINED"/>
    <property type="molecule type" value="Genomic_DNA"/>
</dbReference>
<dbReference type="EMBL" id="M19803">
    <property type="protein sequence ID" value="AAA37393.1"/>
    <property type="status" value="JOINED"/>
    <property type="molecule type" value="Genomic_DNA"/>
</dbReference>
<dbReference type="EMBL" id="M19805">
    <property type="protein sequence ID" value="AAA37393.1"/>
    <property type="status" value="JOINED"/>
    <property type="molecule type" value="Genomic_DNA"/>
</dbReference>
<dbReference type="EMBL" id="M18934">
    <property type="protein sequence ID" value="AAA37397.1"/>
    <property type="molecule type" value="mRNA"/>
</dbReference>
<dbReference type="EMBL" id="BC053731">
    <property type="protein sequence ID" value="AAH53731.1"/>
    <property type="molecule type" value="mRNA"/>
</dbReference>
<dbReference type="CCDS" id="CCDS17681.1"/>
<dbReference type="PIR" id="I49585">
    <property type="entry name" value="I49585"/>
</dbReference>
<dbReference type="RefSeq" id="NP_038514.1">
    <property type="nucleotide sequence ID" value="NM_013486.2"/>
</dbReference>
<dbReference type="SMR" id="P08920"/>
<dbReference type="FunCoup" id="P08920">
    <property type="interactions" value="318"/>
</dbReference>
<dbReference type="IntAct" id="P08920">
    <property type="interactions" value="2"/>
</dbReference>
<dbReference type="MINT" id="P08920"/>
<dbReference type="STRING" id="10090.ENSMUSP00000029456"/>
<dbReference type="GlyCosmos" id="P08920">
    <property type="glycosylation" value="4 sites, No reported glycans"/>
</dbReference>
<dbReference type="GlyGen" id="P08920">
    <property type="glycosylation" value="5 sites, 1 N-linked glycan (1 site)"/>
</dbReference>
<dbReference type="PhosphoSitePlus" id="P08920"/>
<dbReference type="PaxDb" id="10090-ENSMUSP00000029456"/>
<dbReference type="ProteomicsDB" id="280018"/>
<dbReference type="ABCD" id="P08920">
    <property type="antibodies" value="37 sequenced antibodies"/>
</dbReference>
<dbReference type="Antibodypedia" id="1086">
    <property type="antibodies" value="3088 antibodies from 54 providers"/>
</dbReference>
<dbReference type="DNASU" id="12481"/>
<dbReference type="Ensembl" id="ENSMUST00000029456.5">
    <property type="protein sequence ID" value="ENSMUSP00000029456.5"/>
    <property type="gene ID" value="ENSMUSG00000027863.9"/>
</dbReference>
<dbReference type="GeneID" id="12481"/>
<dbReference type="KEGG" id="mmu:12481"/>
<dbReference type="UCSC" id="uc008qrf.1">
    <property type="organism name" value="mouse"/>
</dbReference>
<dbReference type="AGR" id="MGI:88320"/>
<dbReference type="CTD" id="914"/>
<dbReference type="MGI" id="MGI:88320">
    <property type="gene designation" value="Cd2"/>
</dbReference>
<dbReference type="VEuPathDB" id="HostDB:ENSMUSG00000027863"/>
<dbReference type="eggNOG" id="ENOG502S5UN">
    <property type="taxonomic scope" value="Eukaryota"/>
</dbReference>
<dbReference type="GeneTree" id="ENSGT01030000234540"/>
<dbReference type="HOGENOM" id="CLU_069390_0_0_1"/>
<dbReference type="InParanoid" id="P08920"/>
<dbReference type="OMA" id="DIPNFQM"/>
<dbReference type="OrthoDB" id="8439544at2759"/>
<dbReference type="PhylomeDB" id="P08920"/>
<dbReference type="TreeFam" id="TF335971"/>
<dbReference type="BioGRID-ORCS" id="12481">
    <property type="hits" value="3 hits in 76 CRISPR screens"/>
</dbReference>
<dbReference type="ChiTaRS" id="Ccnd2">
    <property type="organism name" value="mouse"/>
</dbReference>
<dbReference type="PRO" id="PR:P08920"/>
<dbReference type="Proteomes" id="UP000000589">
    <property type="component" value="Chromosome 3"/>
</dbReference>
<dbReference type="RNAct" id="P08920">
    <property type="molecule type" value="protein"/>
</dbReference>
<dbReference type="Bgee" id="ENSMUSG00000027863">
    <property type="expression patterns" value="Expressed in peripheral lymph node and 57 other cell types or tissues"/>
</dbReference>
<dbReference type="ExpressionAtlas" id="P08920">
    <property type="expression patterns" value="baseline and differential"/>
</dbReference>
<dbReference type="GO" id="GO:0005911">
    <property type="term" value="C:cell-cell junction"/>
    <property type="evidence" value="ECO:0000314"/>
    <property type="project" value="MGI"/>
</dbReference>
<dbReference type="GO" id="GO:0009898">
    <property type="term" value="C:cytoplasmic side of plasma membrane"/>
    <property type="evidence" value="ECO:0000314"/>
    <property type="project" value="MGI"/>
</dbReference>
<dbReference type="GO" id="GO:0009897">
    <property type="term" value="C:external side of plasma membrane"/>
    <property type="evidence" value="ECO:0000314"/>
    <property type="project" value="MGI"/>
</dbReference>
<dbReference type="GO" id="GO:0005576">
    <property type="term" value="C:extracellular region"/>
    <property type="evidence" value="ECO:0000314"/>
    <property type="project" value="MGI"/>
</dbReference>
<dbReference type="GO" id="GO:0005794">
    <property type="term" value="C:Golgi apparatus"/>
    <property type="evidence" value="ECO:0007669"/>
    <property type="project" value="Ensembl"/>
</dbReference>
<dbReference type="GO" id="GO:0005654">
    <property type="term" value="C:nucleoplasm"/>
    <property type="evidence" value="ECO:0007669"/>
    <property type="project" value="Ensembl"/>
</dbReference>
<dbReference type="GO" id="GO:0005886">
    <property type="term" value="C:plasma membrane"/>
    <property type="evidence" value="ECO:0000314"/>
    <property type="project" value="MGI"/>
</dbReference>
<dbReference type="GO" id="GO:0042802">
    <property type="term" value="F:identical protein binding"/>
    <property type="evidence" value="ECO:0000353"/>
    <property type="project" value="MGI"/>
</dbReference>
<dbReference type="GO" id="GO:0005102">
    <property type="term" value="F:signaling receptor binding"/>
    <property type="evidence" value="ECO:0007669"/>
    <property type="project" value="Ensembl"/>
</dbReference>
<dbReference type="GO" id="GO:0034113">
    <property type="term" value="P:heterotypic cell-cell adhesion"/>
    <property type="evidence" value="ECO:0007669"/>
    <property type="project" value="Ensembl"/>
</dbReference>
<dbReference type="GO" id="GO:0030101">
    <property type="term" value="P:natural killer cell activation"/>
    <property type="evidence" value="ECO:0007669"/>
    <property type="project" value="Ensembl"/>
</dbReference>
<dbReference type="GO" id="GO:0042267">
    <property type="term" value="P:natural killer cell mediated cytotoxicity"/>
    <property type="evidence" value="ECO:0007669"/>
    <property type="project" value="Ensembl"/>
</dbReference>
<dbReference type="GO" id="GO:0032757">
    <property type="term" value="P:positive regulation of interleukin-8 production"/>
    <property type="evidence" value="ECO:0007669"/>
    <property type="project" value="Ensembl"/>
</dbReference>
<dbReference type="GO" id="GO:0032760">
    <property type="term" value="P:positive regulation of tumor necrosis factor production"/>
    <property type="evidence" value="ECO:0007669"/>
    <property type="project" value="Ensembl"/>
</dbReference>
<dbReference type="GO" id="GO:0032729">
    <property type="term" value="P:positive regulation of type II interferon production"/>
    <property type="evidence" value="ECO:0007669"/>
    <property type="project" value="Ensembl"/>
</dbReference>
<dbReference type="FunFam" id="2.60.40.10:FF:001736">
    <property type="entry name" value="T-cell surface antigen CD2"/>
    <property type="match status" value="1"/>
</dbReference>
<dbReference type="FunFam" id="2.60.40.10:FF:003229">
    <property type="entry name" value="T-cell surface antigen CD2"/>
    <property type="match status" value="1"/>
</dbReference>
<dbReference type="Gene3D" id="2.60.40.10">
    <property type="entry name" value="Immunoglobulins"/>
    <property type="match status" value="2"/>
</dbReference>
<dbReference type="InterPro" id="IPR015632">
    <property type="entry name" value="CD2"/>
</dbReference>
<dbReference type="InterPro" id="IPR015631">
    <property type="entry name" value="CD2/SLAM_rcpt"/>
</dbReference>
<dbReference type="InterPro" id="IPR036179">
    <property type="entry name" value="Ig-like_dom_sf"/>
</dbReference>
<dbReference type="InterPro" id="IPR013783">
    <property type="entry name" value="Ig-like_fold"/>
</dbReference>
<dbReference type="InterPro" id="IPR008424">
    <property type="entry name" value="Ig_C2-set"/>
</dbReference>
<dbReference type="InterPro" id="IPR013106">
    <property type="entry name" value="Ig_V-set"/>
</dbReference>
<dbReference type="PANTHER" id="PTHR12080">
    <property type="entry name" value="SIGNALING LYMPHOCYTIC ACTIVATION MOLECULE"/>
    <property type="match status" value="1"/>
</dbReference>
<dbReference type="PANTHER" id="PTHR12080:SF54">
    <property type="entry name" value="T-CELL SURFACE ANTIGEN CD2"/>
    <property type="match status" value="1"/>
</dbReference>
<dbReference type="Pfam" id="PF05790">
    <property type="entry name" value="C2-set"/>
    <property type="match status" value="1"/>
</dbReference>
<dbReference type="Pfam" id="PF07686">
    <property type="entry name" value="V-set"/>
    <property type="match status" value="1"/>
</dbReference>
<dbReference type="PRINTS" id="PR01870">
    <property type="entry name" value="CD2ANTIGEN"/>
</dbReference>
<dbReference type="SUPFAM" id="SSF48726">
    <property type="entry name" value="Immunoglobulin"/>
    <property type="match status" value="2"/>
</dbReference>
<sequence length="344" mass="38415">MKCKFLGSFFLLFSLSGKGADCRDNETIWGVLGHGITLNIPNFQMTDDIDEVRWVRRGTLVAEFKRKKPPFLISETYEVLANGSLKIKKPMMRNDSGTYNVMVYGTNGMTRLEKDLDVRILERVSKPMIHWECPNTTLTCAVLQGTDFELKLYQGETLLNSLPQKNMSYQWTNLNAPFKCEAINPVSKESKMEVVNCPEKGLSFYVTVGVGAGGLLLVLLVALFIFCICKRRKRNRRRKDEELEIKASRTSTVERGPKPHSTPAAAAQNSVALQAPPPPGHHLQTPGHRPLPPGHRTREHQQKKRPPPSGTQIHQQKGPPLPRPRVQPKPPCGSGDGVSLPPPN</sequence>
<gene>
    <name type="primary">Cd2</name>
    <name type="synonym">Ly-37</name>
</gene>
<evidence type="ECO:0000250" key="1">
    <source>
        <dbReference type="UniProtKB" id="P06729"/>
    </source>
</evidence>
<evidence type="ECO:0000250" key="2">
    <source>
        <dbReference type="UniProtKB" id="P08921"/>
    </source>
</evidence>
<evidence type="ECO:0000255" key="3"/>
<evidence type="ECO:0000256" key="4">
    <source>
        <dbReference type="SAM" id="MobiDB-lite"/>
    </source>
</evidence>
<evidence type="ECO:0000269" key="5">
    <source>
    </source>
</evidence>
<evidence type="ECO:0000269" key="6">
    <source>
    </source>
</evidence>
<evidence type="ECO:0000269" key="7">
    <source>
    </source>
</evidence>
<evidence type="ECO:0000305" key="8"/>
<accession>P08920</accession>
<accession>Q61394</accession>